<sequence length="1406" mass="159935">MLMQVEKKKLLSQADIPTKFDPINYLGEYLMRHNTHYIKDPGVSGYQRVMKEITEELKTHVPDTINNRISKMKEKVKEKREQREYISTVKVKVAGMRKQALEEQFNEWVLNPKGMIPIVVYISSYITDLKSEVFEEFLKHLCHSAEEFREIILTDMRRQMFAELFLQCDSGKVMALDRQRTLALLEAFYDQCSSTTRSLLRNPRQWPFVEFEEIELIEFWGDMDIKKHIYEDFDALLLKMNMLVAEKLAGKLAENKDLPQQQRDQELSSDSTTEPETATQLTSQQRSRRVSLTGQGQGKGPRKTSASKQGASRGSVAEQGSRRSSGVNQTQQRGSVAEQGSRRSSAVEQTQQRGSVAEQGSRRSSTVEQTRQRGSVAEQGSRRSSTVEQTQRRGSVAEQGSRRSSGVNQTQQRGSVAEQGSRRSSAVEQTQQRGSVAEQGSRRSSAMEQEPQTAQDPNSDSLPEQESHRGSITEGSHRGSISEPGQRRASVTGQRRKSSVDDSGSAGSRRGSGTDQGQHRGSVGQRKGSGERKMSASEYGPHQESITEEPLTASEPGPQIDTIQELDEDSTPQLEDDSALKESKTSELTKIETQEEKPLLLINEEQVPRDSKQPEVPTSSKKERPSGSPKKGRLSGTSKRDSQKDKACEPKPQHVEGKKWSGEFLICDWKIKHVKSEEEEQAKLICDDTRFTDLHATIRNFQTYKGIKGRSAFNGVSLDLLQFVQLLETFVGEDTSFSLSKDLASFFQKNYSETKQEKIKALEQARQNSSRIRRRILLQAIFEKWDNDGSGFLDLNEVDDLLYTYKEGMERESMKKAKLHINFPEPSPGHEVKLSSKQFQRYIELVVSELRGNEDEVLESVVEFLMGSLERSHVEGLRNCARRKWLHQIQYAAETSGVSLEPVYTETFRVLTQDAEAHGNKKISAHISLLEENVFLPERGHVLLRNVACTLDDAPFVLNKVLYRDMKGISFTVVDEGKPIHVPQVQHHGNIFFWNSFRSKNEYNGSFLALPLQDAYMRIFGVLAVDTLRDPHEINIFLPHEIKFYQGVANAFSTAYHHVHSREHVLHSVMTGIRWLFSVTSGITTITTCFIEPSSEQEDYVLRNMMVTDCLGLAEIHTDPPTITRNACIFRDFLFKCTDTSEVILASSGGETHIAIPLRQRTKEAMGILDVNIGRSRMLLYQEYKDLQKMVKMIQNVSYEILGEFSGEIEKTMVIEMESAGEVKRAGILFFRTMLQELQECLCLLDSMDFVSLLLYEHKYHVDSILQDITLQEVEANVALVHDVLKGVILFSQREKDSLSDLEEWEKWKFHINKYLVEEICVLDPTASNVEVNVELVTSYIQAHSRTEVWNFRNIVIELLYHWINICLTLIELNMRQDVSIIPPLPKKSATSIYAISSERSIREKL</sequence>
<comment type="alternative products">
    <event type="alternative splicing"/>
    <isoform>
        <id>A0JP43-1</id>
        <name>1</name>
        <sequence type="displayed"/>
    </isoform>
    <isoform>
        <id>A0JP43-2</id>
        <name>2</name>
        <sequence type="described" ref="VSP_030736 VSP_030737"/>
    </isoform>
    <isoform>
        <id>A0JP43-3</id>
        <name>3</name>
        <sequence type="described" ref="VSP_030738"/>
    </isoform>
</comment>
<comment type="sequence caution" evidence="5">
    <conflict type="frameshift">
        <sequence resource="EMBL-CDS" id="BAC26618"/>
    </conflict>
</comment>
<comment type="sequence caution" evidence="5">
    <conflict type="frameshift">
        <sequence resource="EMBL-CDS" id="BAC29157"/>
    </conflict>
</comment>
<dbReference type="EMBL" id="AL603842">
    <property type="status" value="NOT_ANNOTATED_CDS"/>
    <property type="molecule type" value="Genomic_DNA"/>
</dbReference>
<dbReference type="EMBL" id="AL663066">
    <property type="status" value="NOT_ANNOTATED_CDS"/>
    <property type="molecule type" value="Genomic_DNA"/>
</dbReference>
<dbReference type="EMBL" id="BX321897">
    <property type="status" value="NOT_ANNOTATED_CDS"/>
    <property type="molecule type" value="Genomic_DNA"/>
</dbReference>
<dbReference type="EMBL" id="DT929470">
    <property type="status" value="NOT_ANNOTATED_CDS"/>
    <property type="molecule type" value="mRNA"/>
</dbReference>
<dbReference type="EMBL" id="AK029790">
    <property type="protein sequence ID" value="BAC26618.1"/>
    <property type="status" value="ALT_FRAME"/>
    <property type="molecule type" value="mRNA"/>
</dbReference>
<dbReference type="EMBL" id="AK035698">
    <property type="protein sequence ID" value="BAC29157.1"/>
    <property type="status" value="ALT_FRAME"/>
    <property type="molecule type" value="mRNA"/>
</dbReference>
<dbReference type="EMBL" id="BC127154">
    <property type="status" value="NOT_ANNOTATED_CDS"/>
    <property type="molecule type" value="mRNA"/>
</dbReference>
<dbReference type="RefSeq" id="NP_795939.2">
    <property type="nucleotide sequence ID" value="NM_176965.3"/>
</dbReference>
<dbReference type="FunCoup" id="A0JP43">
    <property type="interactions" value="2"/>
</dbReference>
<dbReference type="STRING" id="10090.ENSMUSP00000104037"/>
<dbReference type="iPTMnet" id="A0JP43"/>
<dbReference type="PhosphoSitePlus" id="A0JP43"/>
<dbReference type="SwissPalm" id="A0JP43"/>
<dbReference type="PaxDb" id="10090-ENSMUSP00000104037"/>
<dbReference type="ProteomicsDB" id="277548">
    <molecule id="A0JP43-1"/>
</dbReference>
<dbReference type="ProteomicsDB" id="277549">
    <molecule id="A0JP43-2"/>
</dbReference>
<dbReference type="ProteomicsDB" id="277550">
    <molecule id="A0JP43-3"/>
</dbReference>
<dbReference type="Antibodypedia" id="15071">
    <property type="antibodies" value="31 antibodies from 13 providers"/>
</dbReference>
<dbReference type="DNASU" id="319634"/>
<dbReference type="Ensembl" id="ENSMUST00000108400.8">
    <molecule id="A0JP43-1"/>
    <property type="protein sequence ID" value="ENSMUSP00000104037.2"/>
    <property type="gene ID" value="ENSMUSG00000050944.15"/>
</dbReference>
<dbReference type="GeneID" id="319634"/>
<dbReference type="KEGG" id="mmu:319634"/>
<dbReference type="UCSC" id="uc007kgj.1">
    <molecule id="A0JP43-1"/>
    <property type="organism name" value="mouse"/>
</dbReference>
<dbReference type="UCSC" id="uc007kgk.1">
    <molecule id="A0JP43-3"/>
    <property type="organism name" value="mouse"/>
</dbReference>
<dbReference type="AGR" id="MGI:2442440"/>
<dbReference type="CTD" id="374786"/>
<dbReference type="MGI" id="MGI:2442440">
    <property type="gene designation" value="Efcab5"/>
</dbReference>
<dbReference type="VEuPathDB" id="HostDB:ENSMUSG00000050944"/>
<dbReference type="eggNOG" id="ENOG502R5M0">
    <property type="taxonomic scope" value="Eukaryota"/>
</dbReference>
<dbReference type="GeneTree" id="ENSGT00940000154049"/>
<dbReference type="HOGENOM" id="CLU_006376_0_0_1"/>
<dbReference type="InParanoid" id="A0JP43"/>
<dbReference type="OMA" id="KNDYNGS"/>
<dbReference type="OrthoDB" id="199400at2759"/>
<dbReference type="PhylomeDB" id="A0JP43"/>
<dbReference type="TreeFam" id="TF329659"/>
<dbReference type="BioGRID-ORCS" id="319634">
    <property type="hits" value="1 hit in 76 CRISPR screens"/>
</dbReference>
<dbReference type="ChiTaRS" id="Efcab5">
    <property type="organism name" value="mouse"/>
</dbReference>
<dbReference type="PRO" id="PR:A0JP43"/>
<dbReference type="Proteomes" id="UP000000589">
    <property type="component" value="Chromosome 11"/>
</dbReference>
<dbReference type="RNAct" id="A0JP43">
    <property type="molecule type" value="protein"/>
</dbReference>
<dbReference type="Bgee" id="ENSMUSG00000050944">
    <property type="expression patterns" value="Expressed in spermatocyte and 51 other cell types or tissues"/>
</dbReference>
<dbReference type="ExpressionAtlas" id="A0JP43">
    <property type="expression patterns" value="baseline and differential"/>
</dbReference>
<dbReference type="GO" id="GO:0005509">
    <property type="term" value="F:calcium ion binding"/>
    <property type="evidence" value="ECO:0007669"/>
    <property type="project" value="InterPro"/>
</dbReference>
<dbReference type="Gene3D" id="3.30.450.40">
    <property type="match status" value="1"/>
</dbReference>
<dbReference type="InterPro" id="IPR018247">
    <property type="entry name" value="EF_Hand_1_Ca_BS"/>
</dbReference>
<dbReference type="InterPro" id="IPR002048">
    <property type="entry name" value="EF_hand_dom"/>
</dbReference>
<dbReference type="InterPro" id="IPR029016">
    <property type="entry name" value="GAF-like_dom_sf"/>
</dbReference>
<dbReference type="PANTHER" id="PTHR46788">
    <property type="entry name" value="EF-HAND CALCIUM-BINDING DOMAIN-CONTAINING PROTEIN 5"/>
    <property type="match status" value="1"/>
</dbReference>
<dbReference type="PANTHER" id="PTHR46788:SF1">
    <property type="entry name" value="EF-HAND CALCIUM-BINDING DOMAIN-CONTAINING PROTEIN 5"/>
    <property type="match status" value="1"/>
</dbReference>
<dbReference type="SUPFAM" id="SSF55781">
    <property type="entry name" value="GAF domain-like"/>
    <property type="match status" value="1"/>
</dbReference>
<dbReference type="PROSITE" id="PS00018">
    <property type="entry name" value="EF_HAND_1"/>
    <property type="match status" value="1"/>
</dbReference>
<dbReference type="PROSITE" id="PS50222">
    <property type="entry name" value="EF_HAND_2"/>
    <property type="match status" value="1"/>
</dbReference>
<gene>
    <name type="primary">Efcab5</name>
</gene>
<proteinExistence type="evidence at protein level"/>
<protein>
    <recommendedName>
        <fullName>EF-hand calcium-binding domain-containing protein 5</fullName>
    </recommendedName>
</protein>
<feature type="chain" id="PRO_0000315837" description="EF-hand calcium-binding domain-containing protein 5">
    <location>
        <begin position="1"/>
        <end position="1406"/>
    </location>
</feature>
<feature type="domain" description="EF-hand" evidence="1">
    <location>
        <begin position="773"/>
        <end position="808"/>
    </location>
</feature>
<feature type="region of interest" description="Disordered" evidence="2">
    <location>
        <begin position="255"/>
        <end position="655"/>
    </location>
</feature>
<feature type="compositionally biased region" description="Polar residues" evidence="2">
    <location>
        <begin position="258"/>
        <end position="294"/>
    </location>
</feature>
<feature type="compositionally biased region" description="Polar residues" evidence="2">
    <location>
        <begin position="322"/>
        <end position="334"/>
    </location>
</feature>
<feature type="compositionally biased region" description="Polar residues" evidence="2">
    <location>
        <begin position="342"/>
        <end position="354"/>
    </location>
</feature>
<feature type="compositionally biased region" description="Polar residues" evidence="2">
    <location>
        <begin position="362"/>
        <end position="373"/>
    </location>
</feature>
<feature type="compositionally biased region" description="Polar residues" evidence="2">
    <location>
        <begin position="382"/>
        <end position="393"/>
    </location>
</feature>
<feature type="compositionally biased region" description="Polar residues" evidence="2">
    <location>
        <begin position="402"/>
        <end position="414"/>
    </location>
</feature>
<feature type="compositionally biased region" description="Polar residues" evidence="2">
    <location>
        <begin position="422"/>
        <end position="434"/>
    </location>
</feature>
<feature type="compositionally biased region" description="Polar residues" evidence="2">
    <location>
        <begin position="442"/>
        <end position="464"/>
    </location>
</feature>
<feature type="compositionally biased region" description="Basic and acidic residues" evidence="2">
    <location>
        <begin position="465"/>
        <end position="477"/>
    </location>
</feature>
<feature type="compositionally biased region" description="Low complexity" evidence="2">
    <location>
        <begin position="501"/>
        <end position="513"/>
    </location>
</feature>
<feature type="compositionally biased region" description="Acidic residues" evidence="2">
    <location>
        <begin position="564"/>
        <end position="577"/>
    </location>
</feature>
<feature type="compositionally biased region" description="Basic and acidic residues" evidence="2">
    <location>
        <begin position="578"/>
        <end position="598"/>
    </location>
</feature>
<feature type="compositionally biased region" description="Basic and acidic residues" evidence="2">
    <location>
        <begin position="638"/>
        <end position="655"/>
    </location>
</feature>
<feature type="binding site" evidence="1">
    <location>
        <position position="786"/>
    </location>
    <ligand>
        <name>Ca(2+)</name>
        <dbReference type="ChEBI" id="CHEBI:29108"/>
    </ligand>
</feature>
<feature type="binding site" evidence="1">
    <location>
        <position position="788"/>
    </location>
    <ligand>
        <name>Ca(2+)</name>
        <dbReference type="ChEBI" id="CHEBI:29108"/>
    </ligand>
</feature>
<feature type="binding site" evidence="1">
    <location>
        <position position="790"/>
    </location>
    <ligand>
        <name>Ca(2+)</name>
        <dbReference type="ChEBI" id="CHEBI:29108"/>
    </ligand>
</feature>
<feature type="binding site" evidence="1">
    <location>
        <position position="797"/>
    </location>
    <ligand>
        <name>Ca(2+)</name>
        <dbReference type="ChEBI" id="CHEBI:29108"/>
    </ligand>
</feature>
<feature type="splice variant" id="VSP_030736" description="In isoform 2." evidence="3">
    <original>EDYVLRNMMVTDCLGLAEIHT</original>
    <variation>LILGLKSGISGTLSLNSCITG</variation>
    <location>
        <begin position="1098"/>
        <end position="1118"/>
    </location>
</feature>
<feature type="splice variant" id="VSP_030737" description="In isoform 2." evidence="3">
    <location>
        <begin position="1119"/>
        <end position="1406"/>
    </location>
</feature>
<feature type="splice variant" id="VSP_030738" description="In isoform 3." evidence="4">
    <original>HINKYLVEEICVLDPTASNVEVNVELVTSYIQAHSRTEVWNFRNIVIELLYHWINICLTLIELNMRQDVSIIPPLPKKSATSIYAISSERSIREKL</original>
    <variation>VSLGVISSGQILTVELAGVRMQESAASKEHPRNPHPSSQVCMRINILKAHLLSFLMTPSDPKPYSPKLSVIPTSDPRDMTVEDLPVWGCVCW</variation>
    <location>
        <begin position="1311"/>
        <end position="1406"/>
    </location>
</feature>
<organism>
    <name type="scientific">Mus musculus</name>
    <name type="common">Mouse</name>
    <dbReference type="NCBI Taxonomy" id="10090"/>
    <lineage>
        <taxon>Eukaryota</taxon>
        <taxon>Metazoa</taxon>
        <taxon>Chordata</taxon>
        <taxon>Craniata</taxon>
        <taxon>Vertebrata</taxon>
        <taxon>Euteleostomi</taxon>
        <taxon>Mammalia</taxon>
        <taxon>Eutheria</taxon>
        <taxon>Euarchontoglires</taxon>
        <taxon>Glires</taxon>
        <taxon>Rodentia</taxon>
        <taxon>Myomorpha</taxon>
        <taxon>Muroidea</taxon>
        <taxon>Muridae</taxon>
        <taxon>Murinae</taxon>
        <taxon>Mus</taxon>
        <taxon>Mus</taxon>
    </lineage>
</organism>
<keyword id="KW-0025">Alternative splicing</keyword>
<keyword id="KW-0106">Calcium</keyword>
<keyword id="KW-0479">Metal-binding</keyword>
<keyword id="KW-1185">Reference proteome</keyword>
<evidence type="ECO:0000255" key="1">
    <source>
        <dbReference type="PROSITE-ProRule" id="PRU00448"/>
    </source>
</evidence>
<evidence type="ECO:0000256" key="2">
    <source>
        <dbReference type="SAM" id="MobiDB-lite"/>
    </source>
</evidence>
<evidence type="ECO:0000303" key="3">
    <source>
    </source>
</evidence>
<evidence type="ECO:0000303" key="4">
    <source>
    </source>
</evidence>
<evidence type="ECO:0000305" key="5"/>
<reference key="1">
    <citation type="journal article" date="2009" name="PLoS Biol.">
        <title>Lineage-specific biology revealed by a finished genome assembly of the mouse.</title>
        <authorList>
            <person name="Church D.M."/>
            <person name="Goodstadt L."/>
            <person name="Hillier L.W."/>
            <person name="Zody M.C."/>
            <person name="Goldstein S."/>
            <person name="She X."/>
            <person name="Bult C.J."/>
            <person name="Agarwala R."/>
            <person name="Cherry J.L."/>
            <person name="DiCuccio M."/>
            <person name="Hlavina W."/>
            <person name="Kapustin Y."/>
            <person name="Meric P."/>
            <person name="Maglott D."/>
            <person name="Birtle Z."/>
            <person name="Marques A.C."/>
            <person name="Graves T."/>
            <person name="Zhou S."/>
            <person name="Teague B."/>
            <person name="Potamousis K."/>
            <person name="Churas C."/>
            <person name="Place M."/>
            <person name="Herschleb J."/>
            <person name="Runnheim R."/>
            <person name="Forrest D."/>
            <person name="Amos-Landgraf J."/>
            <person name="Schwartz D.C."/>
            <person name="Cheng Z."/>
            <person name="Lindblad-Toh K."/>
            <person name="Eichler E.E."/>
            <person name="Ponting C.P."/>
        </authorList>
    </citation>
    <scope>NUCLEOTIDE SEQUENCE [LARGE SCALE GENOMIC DNA]</scope>
    <source>
        <strain>C57BL/6J</strain>
    </source>
</reference>
<reference key="2">
    <citation type="journal article" date="2005" name="Proc. Natl. Acad. Sci. U.S.A.">
        <title>Diversification of stem cell molecular repertoire by alternative splicing.</title>
        <authorList>
            <person name="Pritsker M."/>
            <person name="Doniger T.T."/>
            <person name="Kramer L.C."/>
            <person name="Westcot S.E."/>
            <person name="Lemischka I.R."/>
        </authorList>
    </citation>
    <scope>NUCLEOTIDE SEQUENCE [MRNA] OF 1-150 (ISOFORM 1)</scope>
</reference>
<reference key="3">
    <citation type="journal article" date="2005" name="Science">
        <title>The transcriptional landscape of the mammalian genome.</title>
        <authorList>
            <person name="Carninci P."/>
            <person name="Kasukawa T."/>
            <person name="Katayama S."/>
            <person name="Gough J."/>
            <person name="Frith M.C."/>
            <person name="Maeda N."/>
            <person name="Oyama R."/>
            <person name="Ravasi T."/>
            <person name="Lenhard B."/>
            <person name="Wells C."/>
            <person name="Kodzius R."/>
            <person name="Shimokawa K."/>
            <person name="Bajic V.B."/>
            <person name="Brenner S.E."/>
            <person name="Batalov S."/>
            <person name="Forrest A.R."/>
            <person name="Zavolan M."/>
            <person name="Davis M.J."/>
            <person name="Wilming L.G."/>
            <person name="Aidinis V."/>
            <person name="Allen J.E."/>
            <person name="Ambesi-Impiombato A."/>
            <person name="Apweiler R."/>
            <person name="Aturaliya R.N."/>
            <person name="Bailey T.L."/>
            <person name="Bansal M."/>
            <person name="Baxter L."/>
            <person name="Beisel K.W."/>
            <person name="Bersano T."/>
            <person name="Bono H."/>
            <person name="Chalk A.M."/>
            <person name="Chiu K.P."/>
            <person name="Choudhary V."/>
            <person name="Christoffels A."/>
            <person name="Clutterbuck D.R."/>
            <person name="Crowe M.L."/>
            <person name="Dalla E."/>
            <person name="Dalrymple B.P."/>
            <person name="de Bono B."/>
            <person name="Della Gatta G."/>
            <person name="di Bernardo D."/>
            <person name="Down T."/>
            <person name="Engstrom P."/>
            <person name="Fagiolini M."/>
            <person name="Faulkner G."/>
            <person name="Fletcher C.F."/>
            <person name="Fukushima T."/>
            <person name="Furuno M."/>
            <person name="Futaki S."/>
            <person name="Gariboldi M."/>
            <person name="Georgii-Hemming P."/>
            <person name="Gingeras T.R."/>
            <person name="Gojobori T."/>
            <person name="Green R.E."/>
            <person name="Gustincich S."/>
            <person name="Harbers M."/>
            <person name="Hayashi Y."/>
            <person name="Hensch T.K."/>
            <person name="Hirokawa N."/>
            <person name="Hill D."/>
            <person name="Huminiecki L."/>
            <person name="Iacono M."/>
            <person name="Ikeo K."/>
            <person name="Iwama A."/>
            <person name="Ishikawa T."/>
            <person name="Jakt M."/>
            <person name="Kanapin A."/>
            <person name="Katoh M."/>
            <person name="Kawasawa Y."/>
            <person name="Kelso J."/>
            <person name="Kitamura H."/>
            <person name="Kitano H."/>
            <person name="Kollias G."/>
            <person name="Krishnan S.P."/>
            <person name="Kruger A."/>
            <person name="Kummerfeld S.K."/>
            <person name="Kurochkin I.V."/>
            <person name="Lareau L.F."/>
            <person name="Lazarevic D."/>
            <person name="Lipovich L."/>
            <person name="Liu J."/>
            <person name="Liuni S."/>
            <person name="McWilliam S."/>
            <person name="Madan Babu M."/>
            <person name="Madera M."/>
            <person name="Marchionni L."/>
            <person name="Matsuda H."/>
            <person name="Matsuzawa S."/>
            <person name="Miki H."/>
            <person name="Mignone F."/>
            <person name="Miyake S."/>
            <person name="Morris K."/>
            <person name="Mottagui-Tabar S."/>
            <person name="Mulder N."/>
            <person name="Nakano N."/>
            <person name="Nakauchi H."/>
            <person name="Ng P."/>
            <person name="Nilsson R."/>
            <person name="Nishiguchi S."/>
            <person name="Nishikawa S."/>
            <person name="Nori F."/>
            <person name="Ohara O."/>
            <person name="Okazaki Y."/>
            <person name="Orlando V."/>
            <person name="Pang K.C."/>
            <person name="Pavan W.J."/>
            <person name="Pavesi G."/>
            <person name="Pesole G."/>
            <person name="Petrovsky N."/>
            <person name="Piazza S."/>
            <person name="Reed J."/>
            <person name="Reid J.F."/>
            <person name="Ring B.Z."/>
            <person name="Ringwald M."/>
            <person name="Rost B."/>
            <person name="Ruan Y."/>
            <person name="Salzberg S.L."/>
            <person name="Sandelin A."/>
            <person name="Schneider C."/>
            <person name="Schoenbach C."/>
            <person name="Sekiguchi K."/>
            <person name="Semple C.A."/>
            <person name="Seno S."/>
            <person name="Sessa L."/>
            <person name="Sheng Y."/>
            <person name="Shibata Y."/>
            <person name="Shimada H."/>
            <person name="Shimada K."/>
            <person name="Silva D."/>
            <person name="Sinclair B."/>
            <person name="Sperling S."/>
            <person name="Stupka E."/>
            <person name="Sugiura K."/>
            <person name="Sultana R."/>
            <person name="Takenaka Y."/>
            <person name="Taki K."/>
            <person name="Tammoja K."/>
            <person name="Tan S.L."/>
            <person name="Tang S."/>
            <person name="Taylor M.S."/>
            <person name="Tegner J."/>
            <person name="Teichmann S.A."/>
            <person name="Ueda H.R."/>
            <person name="van Nimwegen E."/>
            <person name="Verardo R."/>
            <person name="Wei C.L."/>
            <person name="Yagi K."/>
            <person name="Yamanishi H."/>
            <person name="Zabarovsky E."/>
            <person name="Zhu S."/>
            <person name="Zimmer A."/>
            <person name="Hide W."/>
            <person name="Bult C."/>
            <person name="Grimmond S.M."/>
            <person name="Teasdale R.D."/>
            <person name="Liu E.T."/>
            <person name="Brusic V."/>
            <person name="Quackenbush J."/>
            <person name="Wahlestedt C."/>
            <person name="Mattick J.S."/>
            <person name="Hume D.A."/>
            <person name="Kai C."/>
            <person name="Sasaki D."/>
            <person name="Tomaru Y."/>
            <person name="Fukuda S."/>
            <person name="Kanamori-Katayama M."/>
            <person name="Suzuki M."/>
            <person name="Aoki J."/>
            <person name="Arakawa T."/>
            <person name="Iida J."/>
            <person name="Imamura K."/>
            <person name="Itoh M."/>
            <person name="Kato T."/>
            <person name="Kawaji H."/>
            <person name="Kawagashira N."/>
            <person name="Kawashima T."/>
            <person name="Kojima M."/>
            <person name="Kondo S."/>
            <person name="Konno H."/>
            <person name="Nakano K."/>
            <person name="Ninomiya N."/>
            <person name="Nishio T."/>
            <person name="Okada M."/>
            <person name="Plessy C."/>
            <person name="Shibata K."/>
            <person name="Shiraki T."/>
            <person name="Suzuki S."/>
            <person name="Tagami M."/>
            <person name="Waki K."/>
            <person name="Watahiki A."/>
            <person name="Okamura-Oho Y."/>
            <person name="Suzuki H."/>
            <person name="Kawai J."/>
            <person name="Hayashizaki Y."/>
        </authorList>
    </citation>
    <scope>NUCLEOTIDE SEQUENCE [LARGE SCALE MRNA] OF 122-1406 (ISOFORM 1)</scope>
    <scope>NUCLEOTIDE SEQUENCE [LARGE SCALE MRNA] OF 374-1406 (ISOFORM 3)</scope>
    <source>
        <strain>C57BL/6J</strain>
        <tissue>Testis</tissue>
        <tissue>Urinary bladder</tissue>
    </source>
</reference>
<reference key="4">
    <citation type="journal article" date="2004" name="Genome Res.">
        <title>The status, quality, and expansion of the NIH full-length cDNA project: the Mammalian Gene Collection (MGC).</title>
        <authorList>
            <consortium name="The MGC Project Team"/>
        </authorList>
    </citation>
    <scope>NUCLEOTIDE SEQUENCE [LARGE SCALE MRNA] OF 137-1406 (ISOFORM 2)</scope>
</reference>
<reference key="5">
    <citation type="journal article" date="2010" name="Cell">
        <title>A tissue-specific atlas of mouse protein phosphorylation and expression.</title>
        <authorList>
            <person name="Huttlin E.L."/>
            <person name="Jedrychowski M.P."/>
            <person name="Elias J.E."/>
            <person name="Goswami T."/>
            <person name="Rad R."/>
            <person name="Beausoleil S.A."/>
            <person name="Villen J."/>
            <person name="Haas W."/>
            <person name="Sowa M.E."/>
            <person name="Gygi S.P."/>
        </authorList>
    </citation>
    <scope>IDENTIFICATION BY MASS SPECTROMETRY [LARGE SCALE ANALYSIS]</scope>
    <source>
        <tissue>Testis</tissue>
    </source>
</reference>
<accession>A0JP43</accession>
<accession>B0QZJ9</accession>
<accession>Q5NC53</accession>
<accession>Q8CBN1</accession>
<accession>Q8CDP1</accession>
<name>EFCB5_MOUSE</name>